<sequence>MKEYKTISEIAGPLLFVRKTEPVGYQELVNIVLSDGTVKRGQVLDSSNDVVAVQVFEGTSGISRDSSVKFLGETIKMPVSKDMLGRILSGSGEPLDGGPAIIPEKRLEIVGAAINPYSRRQPKDFIQTGISTIDGMNTLVRGQKLPIFSGSGLPHNEIALQIARQAKVVGSTEPFAVVFCAMGITAEEAQTFMKDFERTGALERAVVFLNLADDPAIERIITPRLALTTAEYLAFEHDMHVLVIYTDMTNYCEALRQIGAAREEVPGRRGYPGYMYTDLAQLYERAGIIEGKKGSITQVPILTMPGDDITHPIPDLTGYITEGQIVVARDLHRKNIYPPINVSPSLSRLMSLGIGAGKTREDHKAVSDQCYSAYAEGKDLRGLVAIVGKDALSERDRQFLEFADAFEDKFVRQGREEDRSIEQTLDLAWELLSMLPINALNKIDNKYIEKYHPSKRKK</sequence>
<gene>
    <name evidence="1" type="primary">atpB</name>
    <name type="ordered locus">UNCMA_10650</name>
    <name type="ORF">RCIX2032</name>
</gene>
<accession>Q0W362</accession>
<name>AATB_METAR</name>
<reference key="1">
    <citation type="journal article" date="2006" name="Science">
        <title>Genome of rice cluster I archaea -- the key methane producers in the rice rhizosphere.</title>
        <authorList>
            <person name="Erkel C."/>
            <person name="Kube M."/>
            <person name="Reinhardt R."/>
            <person name="Liesack W."/>
        </authorList>
    </citation>
    <scope>NUCLEOTIDE SEQUENCE [LARGE SCALE GENOMIC DNA]</scope>
    <source>
        <strain>DSM 22066 / NBRC 105507 / MRE50</strain>
    </source>
</reference>
<protein>
    <recommendedName>
        <fullName evidence="1">A-type ATP synthase subunit B</fullName>
    </recommendedName>
</protein>
<evidence type="ECO:0000255" key="1">
    <source>
        <dbReference type="HAMAP-Rule" id="MF_00310"/>
    </source>
</evidence>
<dbReference type="EMBL" id="AM114193">
    <property type="protein sequence ID" value="CAJ37181.1"/>
    <property type="molecule type" value="Genomic_DNA"/>
</dbReference>
<dbReference type="RefSeq" id="WP_012035393.1">
    <property type="nucleotide sequence ID" value="NC_009464.1"/>
</dbReference>
<dbReference type="SMR" id="Q0W362"/>
<dbReference type="STRING" id="351160.RCIX2032"/>
<dbReference type="GeneID" id="5145491"/>
<dbReference type="KEGG" id="rci:RCIX2032"/>
<dbReference type="PATRIC" id="fig|351160.9.peg.1100"/>
<dbReference type="eggNOG" id="arCOG00865">
    <property type="taxonomic scope" value="Archaea"/>
</dbReference>
<dbReference type="OrthoDB" id="32941at2157"/>
<dbReference type="Proteomes" id="UP000000663">
    <property type="component" value="Chromosome"/>
</dbReference>
<dbReference type="GO" id="GO:0005886">
    <property type="term" value="C:plasma membrane"/>
    <property type="evidence" value="ECO:0007669"/>
    <property type="project" value="UniProtKB-SubCell"/>
</dbReference>
<dbReference type="GO" id="GO:0033178">
    <property type="term" value="C:proton-transporting two-sector ATPase complex, catalytic domain"/>
    <property type="evidence" value="ECO:0007669"/>
    <property type="project" value="InterPro"/>
</dbReference>
<dbReference type="GO" id="GO:0005524">
    <property type="term" value="F:ATP binding"/>
    <property type="evidence" value="ECO:0007669"/>
    <property type="project" value="UniProtKB-UniRule"/>
</dbReference>
<dbReference type="GO" id="GO:0046933">
    <property type="term" value="F:proton-transporting ATP synthase activity, rotational mechanism"/>
    <property type="evidence" value="ECO:0007669"/>
    <property type="project" value="UniProtKB-UniRule"/>
</dbReference>
<dbReference type="GO" id="GO:0042777">
    <property type="term" value="P:proton motive force-driven plasma membrane ATP synthesis"/>
    <property type="evidence" value="ECO:0007669"/>
    <property type="project" value="UniProtKB-UniRule"/>
</dbReference>
<dbReference type="CDD" id="cd18112">
    <property type="entry name" value="ATP-synt_V_A-type_beta_C"/>
    <property type="match status" value="1"/>
</dbReference>
<dbReference type="CDD" id="cd18118">
    <property type="entry name" value="ATP-synt_V_A-type_beta_N"/>
    <property type="match status" value="1"/>
</dbReference>
<dbReference type="CDD" id="cd01135">
    <property type="entry name" value="V_A-ATPase_B"/>
    <property type="match status" value="1"/>
</dbReference>
<dbReference type="Gene3D" id="3.40.50.12240">
    <property type="match status" value="1"/>
</dbReference>
<dbReference type="HAMAP" id="MF_00310">
    <property type="entry name" value="ATP_synth_B_arch"/>
    <property type="match status" value="1"/>
</dbReference>
<dbReference type="InterPro" id="IPR055190">
    <property type="entry name" value="ATP-synt_VA_C"/>
</dbReference>
<dbReference type="InterPro" id="IPR020003">
    <property type="entry name" value="ATPase_a/bsu_AS"/>
</dbReference>
<dbReference type="InterPro" id="IPR005724">
    <property type="entry name" value="ATPase_A1-cplx_bsu"/>
</dbReference>
<dbReference type="InterPro" id="IPR004100">
    <property type="entry name" value="ATPase_F1/V1/A1_a/bsu_N"/>
</dbReference>
<dbReference type="InterPro" id="IPR000194">
    <property type="entry name" value="ATPase_F1/V1/A1_a/bsu_nucl-bd"/>
</dbReference>
<dbReference type="InterPro" id="IPR027417">
    <property type="entry name" value="P-loop_NTPase"/>
</dbReference>
<dbReference type="InterPro" id="IPR022879">
    <property type="entry name" value="V-ATPase_su_B/beta"/>
</dbReference>
<dbReference type="NCBIfam" id="TIGR01041">
    <property type="entry name" value="ATP_syn_B_arch"/>
    <property type="match status" value="1"/>
</dbReference>
<dbReference type="NCBIfam" id="NF003235">
    <property type="entry name" value="PRK04196.1"/>
    <property type="match status" value="1"/>
</dbReference>
<dbReference type="PANTHER" id="PTHR43389">
    <property type="entry name" value="V-TYPE PROTON ATPASE SUBUNIT B"/>
    <property type="match status" value="1"/>
</dbReference>
<dbReference type="PANTHER" id="PTHR43389:SF4">
    <property type="entry name" value="V-TYPE PROTON ATPASE SUBUNIT B"/>
    <property type="match status" value="1"/>
</dbReference>
<dbReference type="Pfam" id="PF00006">
    <property type="entry name" value="ATP-synt_ab"/>
    <property type="match status" value="1"/>
</dbReference>
<dbReference type="Pfam" id="PF02874">
    <property type="entry name" value="ATP-synt_ab_N"/>
    <property type="match status" value="1"/>
</dbReference>
<dbReference type="Pfam" id="PF22919">
    <property type="entry name" value="ATP-synt_VA_C"/>
    <property type="match status" value="1"/>
</dbReference>
<dbReference type="PIRSF" id="PIRSF039114">
    <property type="entry name" value="V-ATPsynth_beta/V-ATPase_B"/>
    <property type="match status" value="1"/>
</dbReference>
<dbReference type="SUPFAM" id="SSF47917">
    <property type="entry name" value="C-terminal domain of alpha and beta subunits of F1 ATP synthase"/>
    <property type="match status" value="1"/>
</dbReference>
<dbReference type="SUPFAM" id="SSF52540">
    <property type="entry name" value="P-loop containing nucleoside triphosphate hydrolases"/>
    <property type="match status" value="1"/>
</dbReference>
<dbReference type="PROSITE" id="PS00152">
    <property type="entry name" value="ATPASE_ALPHA_BETA"/>
    <property type="match status" value="1"/>
</dbReference>
<comment type="function">
    <text evidence="1">Component of the A-type ATP synthase that produces ATP from ADP in the presence of a proton gradient across the membrane. The B chain is a regulatory subunit.</text>
</comment>
<comment type="subunit">
    <text evidence="1">Has multiple subunits with at least A(3), B(3), C, D, E, F, H, I and proteolipid K(x).</text>
</comment>
<comment type="subcellular location">
    <subcellularLocation>
        <location evidence="1">Cell membrane</location>
        <topology evidence="1">Peripheral membrane protein</topology>
    </subcellularLocation>
</comment>
<comment type="similarity">
    <text evidence="1">Belongs to the ATPase alpha/beta chains family.</text>
</comment>
<proteinExistence type="inferred from homology"/>
<keyword id="KW-0066">ATP synthesis</keyword>
<keyword id="KW-1003">Cell membrane</keyword>
<keyword id="KW-0375">Hydrogen ion transport</keyword>
<keyword id="KW-0406">Ion transport</keyword>
<keyword id="KW-0472">Membrane</keyword>
<keyword id="KW-1185">Reference proteome</keyword>
<keyword id="KW-0813">Transport</keyword>
<organism>
    <name type="scientific">Methanocella arvoryzae (strain DSM 22066 / NBRC 105507 / MRE50)</name>
    <dbReference type="NCBI Taxonomy" id="351160"/>
    <lineage>
        <taxon>Archaea</taxon>
        <taxon>Methanobacteriati</taxon>
        <taxon>Methanobacteriota</taxon>
        <taxon>Stenosarchaea group</taxon>
        <taxon>Methanomicrobia</taxon>
        <taxon>Methanocellales</taxon>
        <taxon>Methanocellaceae</taxon>
        <taxon>Methanocella</taxon>
    </lineage>
</organism>
<feature type="chain" id="PRO_1000059400" description="A-type ATP synthase subunit B">
    <location>
        <begin position="1"/>
        <end position="458"/>
    </location>
</feature>